<sequence>MGAPGGKINRPRTELKKKLFKRRRVLNRERRLRHRVVGAVIDQGLITRHHLKKRASSARANITLSGKKRRKLLQQIRLAQKEKTAMEVEAPSKPARTSEPQLKRQKKTKAPQDVEMKDLEDES</sequence>
<protein>
    <recommendedName>
        <fullName evidence="2">Uncharacterized protein C11orf98</fullName>
    </recommendedName>
</protein>
<reference key="1">
    <citation type="journal article" date="2006" name="Nature">
        <title>Human chromosome 11 DNA sequence and analysis including novel gene identification.</title>
        <authorList>
            <person name="Taylor T.D."/>
            <person name="Noguchi H."/>
            <person name="Totoki Y."/>
            <person name="Toyoda A."/>
            <person name="Kuroki Y."/>
            <person name="Dewar K."/>
            <person name="Lloyd C."/>
            <person name="Itoh T."/>
            <person name="Takeda T."/>
            <person name="Kim D.-W."/>
            <person name="She X."/>
            <person name="Barlow K.F."/>
            <person name="Bloom T."/>
            <person name="Bruford E."/>
            <person name="Chang J.L."/>
            <person name="Cuomo C.A."/>
            <person name="Eichler E."/>
            <person name="FitzGerald M.G."/>
            <person name="Jaffe D.B."/>
            <person name="LaButti K."/>
            <person name="Nicol R."/>
            <person name="Park H.-S."/>
            <person name="Seaman C."/>
            <person name="Sougnez C."/>
            <person name="Yang X."/>
            <person name="Zimmer A.R."/>
            <person name="Zody M.C."/>
            <person name="Birren B.W."/>
            <person name="Nusbaum C."/>
            <person name="Fujiyama A."/>
            <person name="Hattori M."/>
            <person name="Rogers J."/>
            <person name="Lander E.S."/>
            <person name="Sakaki Y."/>
        </authorList>
    </citation>
    <scope>NUCLEOTIDE SEQUENCE [LARGE SCALE GENOMIC DNA]</scope>
</reference>
<reference key="2">
    <citation type="submission" date="2005-07" db="EMBL/GenBank/DDBJ databases">
        <authorList>
            <person name="Mural R.J."/>
            <person name="Istrail S."/>
            <person name="Sutton G.G."/>
            <person name="Florea L."/>
            <person name="Halpern A.L."/>
            <person name="Mobarry C.M."/>
            <person name="Lippert R."/>
            <person name="Walenz B."/>
            <person name="Shatkay H."/>
            <person name="Dew I."/>
            <person name="Miller J.R."/>
            <person name="Flanigan M.J."/>
            <person name="Edwards N.J."/>
            <person name="Bolanos R."/>
            <person name="Fasulo D."/>
            <person name="Halldorsson B.V."/>
            <person name="Hannenhalli S."/>
            <person name="Turner R."/>
            <person name="Yooseph S."/>
            <person name="Lu F."/>
            <person name="Nusskern D.R."/>
            <person name="Shue B.C."/>
            <person name="Zheng X.H."/>
            <person name="Zhong F."/>
            <person name="Delcher A.L."/>
            <person name="Huson D.H."/>
            <person name="Kravitz S.A."/>
            <person name="Mouchard L."/>
            <person name="Reinert K."/>
            <person name="Remington K.A."/>
            <person name="Clark A.G."/>
            <person name="Waterman M.S."/>
            <person name="Eichler E.E."/>
            <person name="Adams M.D."/>
            <person name="Hunkapiller M.W."/>
            <person name="Myers E.W."/>
            <person name="Venter J.C."/>
        </authorList>
    </citation>
    <scope>NUCLEOTIDE SEQUENCE [LARGE SCALE GENOMIC DNA]</scope>
</reference>
<gene>
    <name evidence="3" type="primary">C11orf98</name>
</gene>
<organism>
    <name type="scientific">Homo sapiens</name>
    <name type="common">Human</name>
    <dbReference type="NCBI Taxonomy" id="9606"/>
    <lineage>
        <taxon>Eukaryota</taxon>
        <taxon>Metazoa</taxon>
        <taxon>Chordata</taxon>
        <taxon>Craniata</taxon>
        <taxon>Vertebrata</taxon>
        <taxon>Euteleostomi</taxon>
        <taxon>Mammalia</taxon>
        <taxon>Eutheria</taxon>
        <taxon>Euarchontoglires</taxon>
        <taxon>Primates</taxon>
        <taxon>Haplorrhini</taxon>
        <taxon>Catarrhini</taxon>
        <taxon>Hominidae</taxon>
        <taxon>Homo</taxon>
    </lineage>
</organism>
<proteinExistence type="evidence at protein level"/>
<accession>E9PRG8</accession>
<accession>A0A0B4J220</accession>
<dbReference type="EMBL" id="AP001458">
    <property type="status" value="NOT_ANNOTATED_CDS"/>
    <property type="molecule type" value="Genomic_DNA"/>
</dbReference>
<dbReference type="EMBL" id="CH471076">
    <property type="protein sequence ID" value="EAW74054.1"/>
    <property type="molecule type" value="Genomic_DNA"/>
</dbReference>
<dbReference type="CCDS" id="CCDS73306.1"/>
<dbReference type="RefSeq" id="NP_001273015.1">
    <property type="nucleotide sequence ID" value="NM_001286086.2"/>
</dbReference>
<dbReference type="PDB" id="8INF">
    <property type="method" value="EM"/>
    <property type="resolution" value="3.00 A"/>
    <property type="chains" value="1=1-123"/>
</dbReference>
<dbReference type="PDBsum" id="8INF"/>
<dbReference type="EMDB" id="EMD-35597"/>
<dbReference type="SMR" id="E9PRG8"/>
<dbReference type="FunCoup" id="E9PRG8">
    <property type="interactions" value="387"/>
</dbReference>
<dbReference type="IntAct" id="E9PRG8">
    <property type="interactions" value="34"/>
</dbReference>
<dbReference type="MINT" id="E9PRG8"/>
<dbReference type="STRING" id="9606.ENSP00000432523"/>
<dbReference type="GlyGen" id="E9PRG8">
    <property type="glycosylation" value="1 site, 1 O-linked glycan (1 site)"/>
</dbReference>
<dbReference type="iPTMnet" id="E9PRG8"/>
<dbReference type="PhosphoSitePlus" id="E9PRG8"/>
<dbReference type="SwissPalm" id="E9PRG8"/>
<dbReference type="BioMuta" id="C11orf98"/>
<dbReference type="jPOST" id="E9PRG8"/>
<dbReference type="MassIVE" id="E9PRG8"/>
<dbReference type="PaxDb" id="9606-ENSP00000432523"/>
<dbReference type="PeptideAtlas" id="E9PRG8"/>
<dbReference type="ProteomicsDB" id="23311"/>
<dbReference type="Pumba" id="E9PRG8"/>
<dbReference type="DNASU" id="102288414"/>
<dbReference type="Ensembl" id="ENST00000524958.6">
    <property type="protein sequence ID" value="ENSP00000432523.2"/>
    <property type="gene ID" value="ENSG00000278615.5"/>
</dbReference>
<dbReference type="GeneID" id="102288414"/>
<dbReference type="KEGG" id="hsa:102288414"/>
<dbReference type="MANE-Select" id="ENST00000524958.6">
    <property type="protein sequence ID" value="ENSP00000432523.2"/>
    <property type="RefSeq nucleotide sequence ID" value="NM_001286086.2"/>
    <property type="RefSeq protein sequence ID" value="NP_001273015.1"/>
</dbReference>
<dbReference type="UCSC" id="uc058cke.1">
    <property type="organism name" value="human"/>
</dbReference>
<dbReference type="AGR" id="HGNC:51238"/>
<dbReference type="CTD" id="102288414"/>
<dbReference type="GeneCards" id="C11orf98"/>
<dbReference type="HGNC" id="HGNC:51238">
    <property type="gene designation" value="C11orf98"/>
</dbReference>
<dbReference type="HPA" id="ENSG00000278615">
    <property type="expression patterns" value="Low tissue specificity"/>
</dbReference>
<dbReference type="neXtProt" id="NX_E9PRG8"/>
<dbReference type="OpenTargets" id="ENSG00000278615"/>
<dbReference type="VEuPathDB" id="HostDB:ENSG00000278615"/>
<dbReference type="eggNOG" id="ENOG502S62W">
    <property type="taxonomic scope" value="Eukaryota"/>
</dbReference>
<dbReference type="GeneTree" id="ENSGT00390000002615"/>
<dbReference type="HOGENOM" id="CLU_162769_0_0_1"/>
<dbReference type="InParanoid" id="E9PRG8"/>
<dbReference type="OMA" id="INGPRTE"/>
<dbReference type="OrthoDB" id="6147870at2759"/>
<dbReference type="PAN-GO" id="E9PRG8">
    <property type="GO annotations" value="0 GO annotations based on evolutionary models"/>
</dbReference>
<dbReference type="PathwayCommons" id="E9PRG8"/>
<dbReference type="SignaLink" id="E9PRG8"/>
<dbReference type="BioGRID-ORCS" id="102288414">
    <property type="hits" value="3 hits in 406 CRISPR screens"/>
</dbReference>
<dbReference type="GenomeRNAi" id="102288414"/>
<dbReference type="Pharos" id="E9PRG8">
    <property type="development level" value="Tdark"/>
</dbReference>
<dbReference type="PRO" id="PR:E9PRG8"/>
<dbReference type="Proteomes" id="UP000005640">
    <property type="component" value="Chromosome 11"/>
</dbReference>
<dbReference type="RNAct" id="E9PRG8">
    <property type="molecule type" value="protein"/>
</dbReference>
<dbReference type="Bgee" id="ENSG00000278615">
    <property type="expression patterns" value="Expressed in mucosa of transverse colon and 95 other cell types or tissues"/>
</dbReference>
<dbReference type="ExpressionAtlas" id="E9PRG8">
    <property type="expression patterns" value="baseline and differential"/>
</dbReference>
<dbReference type="InterPro" id="IPR037691">
    <property type="entry name" value="C11orf98"/>
</dbReference>
<dbReference type="PANTHER" id="PTHR14554:SF1">
    <property type="entry name" value="CHROMOSOME 11 OPEN READING FRAME 98"/>
    <property type="match status" value="1"/>
</dbReference>
<dbReference type="PANTHER" id="PTHR14554">
    <property type="entry name" value="GENE, 49416-RELATED"/>
    <property type="match status" value="1"/>
</dbReference>
<dbReference type="Pfam" id="PF17719">
    <property type="entry name" value="DUF5564"/>
    <property type="match status" value="1"/>
</dbReference>
<evidence type="ECO:0000256" key="1">
    <source>
        <dbReference type="SAM" id="MobiDB-lite"/>
    </source>
</evidence>
<evidence type="ECO:0000305" key="2"/>
<evidence type="ECO:0000312" key="3">
    <source>
        <dbReference type="HGNC" id="HGNC:51238"/>
    </source>
</evidence>
<feature type="chain" id="PRO_0000432396" description="Uncharacterized protein C11orf98">
    <location>
        <begin position="1"/>
        <end position="123"/>
    </location>
</feature>
<feature type="region of interest" description="Disordered" evidence="1">
    <location>
        <begin position="1"/>
        <end position="21"/>
    </location>
</feature>
<feature type="region of interest" description="Disordered" evidence="1">
    <location>
        <begin position="82"/>
        <end position="123"/>
    </location>
</feature>
<name>CK098_HUMAN</name>
<keyword id="KW-0002">3D-structure</keyword>
<keyword id="KW-1267">Proteomics identification</keyword>
<keyword id="KW-1185">Reference proteome</keyword>